<accession>Q82WI7</accession>
<evidence type="ECO:0000255" key="1">
    <source>
        <dbReference type="HAMAP-Rule" id="MF_01031"/>
    </source>
</evidence>
<proteinExistence type="inferred from homology"/>
<dbReference type="EC" id="4.2.1.33" evidence="1"/>
<dbReference type="EMBL" id="AL954747">
    <property type="protein sequence ID" value="CAD84598.1"/>
    <property type="molecule type" value="Genomic_DNA"/>
</dbReference>
<dbReference type="RefSeq" id="WP_011111308.1">
    <property type="nucleotide sequence ID" value="NC_004757.1"/>
</dbReference>
<dbReference type="SMR" id="Q82WI7"/>
<dbReference type="STRING" id="228410.NE0687"/>
<dbReference type="GeneID" id="87103882"/>
<dbReference type="KEGG" id="neu:NE0687"/>
<dbReference type="eggNOG" id="COG0066">
    <property type="taxonomic scope" value="Bacteria"/>
</dbReference>
<dbReference type="HOGENOM" id="CLU_081378_0_3_4"/>
<dbReference type="OrthoDB" id="9777465at2"/>
<dbReference type="PhylomeDB" id="Q82WI7"/>
<dbReference type="UniPathway" id="UPA00048">
    <property type="reaction ID" value="UER00071"/>
</dbReference>
<dbReference type="Proteomes" id="UP000001416">
    <property type="component" value="Chromosome"/>
</dbReference>
<dbReference type="GO" id="GO:0009316">
    <property type="term" value="C:3-isopropylmalate dehydratase complex"/>
    <property type="evidence" value="ECO:0007669"/>
    <property type="project" value="InterPro"/>
</dbReference>
<dbReference type="GO" id="GO:0003861">
    <property type="term" value="F:3-isopropylmalate dehydratase activity"/>
    <property type="evidence" value="ECO:0007669"/>
    <property type="project" value="UniProtKB-UniRule"/>
</dbReference>
<dbReference type="GO" id="GO:0009098">
    <property type="term" value="P:L-leucine biosynthetic process"/>
    <property type="evidence" value="ECO:0007669"/>
    <property type="project" value="UniProtKB-UniRule"/>
</dbReference>
<dbReference type="CDD" id="cd01577">
    <property type="entry name" value="IPMI_Swivel"/>
    <property type="match status" value="1"/>
</dbReference>
<dbReference type="FunFam" id="3.20.19.10:FF:000003">
    <property type="entry name" value="3-isopropylmalate dehydratase small subunit"/>
    <property type="match status" value="1"/>
</dbReference>
<dbReference type="Gene3D" id="3.20.19.10">
    <property type="entry name" value="Aconitase, domain 4"/>
    <property type="match status" value="1"/>
</dbReference>
<dbReference type="HAMAP" id="MF_01031">
    <property type="entry name" value="LeuD_type1"/>
    <property type="match status" value="1"/>
</dbReference>
<dbReference type="InterPro" id="IPR004431">
    <property type="entry name" value="3-IsopropMal_deHydase_ssu"/>
</dbReference>
<dbReference type="InterPro" id="IPR015928">
    <property type="entry name" value="Aconitase/3IPM_dehydase_swvl"/>
</dbReference>
<dbReference type="InterPro" id="IPR000573">
    <property type="entry name" value="AconitaseA/IPMdHydase_ssu_swvl"/>
</dbReference>
<dbReference type="InterPro" id="IPR033940">
    <property type="entry name" value="IPMI_Swivel"/>
</dbReference>
<dbReference type="InterPro" id="IPR050075">
    <property type="entry name" value="LeuD"/>
</dbReference>
<dbReference type="NCBIfam" id="TIGR00171">
    <property type="entry name" value="leuD"/>
    <property type="match status" value="1"/>
</dbReference>
<dbReference type="NCBIfam" id="NF002458">
    <property type="entry name" value="PRK01641.1"/>
    <property type="match status" value="1"/>
</dbReference>
<dbReference type="PANTHER" id="PTHR43345:SF5">
    <property type="entry name" value="3-ISOPROPYLMALATE DEHYDRATASE SMALL SUBUNIT"/>
    <property type="match status" value="1"/>
</dbReference>
<dbReference type="PANTHER" id="PTHR43345">
    <property type="entry name" value="3-ISOPROPYLMALATE DEHYDRATASE SMALL SUBUNIT 2-RELATED-RELATED"/>
    <property type="match status" value="1"/>
</dbReference>
<dbReference type="Pfam" id="PF00694">
    <property type="entry name" value="Aconitase_C"/>
    <property type="match status" value="1"/>
</dbReference>
<dbReference type="SUPFAM" id="SSF52016">
    <property type="entry name" value="LeuD/IlvD-like"/>
    <property type="match status" value="1"/>
</dbReference>
<keyword id="KW-0028">Amino-acid biosynthesis</keyword>
<keyword id="KW-0100">Branched-chain amino acid biosynthesis</keyword>
<keyword id="KW-0432">Leucine biosynthesis</keyword>
<keyword id="KW-0456">Lyase</keyword>
<keyword id="KW-1185">Reference proteome</keyword>
<comment type="function">
    <text evidence="1">Catalyzes the isomerization between 2-isopropylmalate and 3-isopropylmalate, via the formation of 2-isopropylmaleate.</text>
</comment>
<comment type="catalytic activity">
    <reaction evidence="1">
        <text>(2R,3S)-3-isopropylmalate = (2S)-2-isopropylmalate</text>
        <dbReference type="Rhea" id="RHEA:32287"/>
        <dbReference type="ChEBI" id="CHEBI:1178"/>
        <dbReference type="ChEBI" id="CHEBI:35121"/>
        <dbReference type="EC" id="4.2.1.33"/>
    </reaction>
</comment>
<comment type="pathway">
    <text evidence="1">Amino-acid biosynthesis; L-leucine biosynthesis; L-leucine from 3-methyl-2-oxobutanoate: step 2/4.</text>
</comment>
<comment type="subunit">
    <text evidence="1">Heterodimer of LeuC and LeuD.</text>
</comment>
<comment type="similarity">
    <text evidence="1">Belongs to the LeuD family. LeuD type 1 subfamily.</text>
</comment>
<feature type="chain" id="PRO_0000141848" description="3-isopropylmalate dehydratase small subunit">
    <location>
        <begin position="1"/>
        <end position="221"/>
    </location>
</feature>
<protein>
    <recommendedName>
        <fullName evidence="1">3-isopropylmalate dehydratase small subunit</fullName>
        <ecNumber evidence="1">4.2.1.33</ecNumber>
    </recommendedName>
    <alternativeName>
        <fullName evidence="1">Alpha-IPM isomerase</fullName>
        <shortName evidence="1">IPMI</shortName>
    </alternativeName>
    <alternativeName>
        <fullName evidence="1">Isopropylmalate isomerase</fullName>
    </alternativeName>
</protein>
<gene>
    <name evidence="1" type="primary">leuD</name>
    <name type="ordered locus">NE0687</name>
</gene>
<name>LEUD_NITEU</name>
<organism>
    <name type="scientific">Nitrosomonas europaea (strain ATCC 19718 / CIP 103999 / KCTC 2705 / NBRC 14298)</name>
    <dbReference type="NCBI Taxonomy" id="228410"/>
    <lineage>
        <taxon>Bacteria</taxon>
        <taxon>Pseudomonadati</taxon>
        <taxon>Pseudomonadota</taxon>
        <taxon>Betaproteobacteria</taxon>
        <taxon>Nitrosomonadales</taxon>
        <taxon>Nitrosomonadaceae</taxon>
        <taxon>Nitrosomonas</taxon>
    </lineage>
</organism>
<reference key="1">
    <citation type="journal article" date="2003" name="J. Bacteriol.">
        <title>Complete genome sequence of the ammonia-oxidizing bacterium and obligate chemolithoautotroph Nitrosomonas europaea.</title>
        <authorList>
            <person name="Chain P."/>
            <person name="Lamerdin J.E."/>
            <person name="Larimer F.W."/>
            <person name="Regala W."/>
            <person name="Lao V."/>
            <person name="Land M.L."/>
            <person name="Hauser L."/>
            <person name="Hooper A.B."/>
            <person name="Klotz M.G."/>
            <person name="Norton J."/>
            <person name="Sayavedra-Soto L.A."/>
            <person name="Arciero D.M."/>
            <person name="Hommes N.G."/>
            <person name="Whittaker M.M."/>
            <person name="Arp D.J."/>
        </authorList>
    </citation>
    <scope>NUCLEOTIDE SEQUENCE [LARGE SCALE GENOMIC DNA]</scope>
    <source>
        <strain>ATCC 19718 / CIP 103999 / KCTC 2705 / NBRC 14298</strain>
    </source>
</reference>
<sequence length="221" mass="25456">MEKFEQFKGIVAPLDRANVDTDAIIPKQFLKSIKRSGFGQNLFDEWRYLDYGEPGKDISLRQLNPDFILNQPRYQGARILVARDNFGCGSSREHAPWALQDYGFAVIIAPSFADIFYNNCFKIGLLPIVSEASIVDRLIRDTLETDGYRLEVNLDAQTVTTPSGEIHRFEVDSFRKHCLLNGLDEIGLTLQHADKIRTFEMNRRDRQPWLFLQQNGDKLRT</sequence>